<protein>
    <recommendedName>
        <fullName evidence="1">Triosephosphate isomerase</fullName>
        <shortName evidence="1">TIM</shortName>
        <shortName evidence="1">TPI</shortName>
        <ecNumber evidence="1">5.3.1.1</ecNumber>
    </recommendedName>
    <alternativeName>
        <fullName evidence="1">Triose-phosphate isomerase</fullName>
    </alternativeName>
</protein>
<dbReference type="EC" id="5.3.1.1" evidence="1"/>
<dbReference type="EMBL" id="AE014299">
    <property type="protein sequence ID" value="AAN54270.1"/>
    <property type="molecule type" value="Genomic_DNA"/>
</dbReference>
<dbReference type="RefSeq" id="NP_716825.1">
    <property type="nucleotide sequence ID" value="NC_004347.2"/>
</dbReference>
<dbReference type="RefSeq" id="WP_011071430.1">
    <property type="nucleotide sequence ID" value="NZ_CP053946.1"/>
</dbReference>
<dbReference type="SMR" id="Q8EHL9"/>
<dbReference type="STRING" id="211586.SO_1200"/>
<dbReference type="PaxDb" id="211586-SO_1200"/>
<dbReference type="GeneID" id="94727015"/>
<dbReference type="KEGG" id="son:SO_1200"/>
<dbReference type="PATRIC" id="fig|211586.12.peg.1152"/>
<dbReference type="eggNOG" id="COG0149">
    <property type="taxonomic scope" value="Bacteria"/>
</dbReference>
<dbReference type="HOGENOM" id="CLU_024251_2_1_6"/>
<dbReference type="OrthoDB" id="9809429at2"/>
<dbReference type="PhylomeDB" id="Q8EHL9"/>
<dbReference type="BioCyc" id="SONE211586:G1GMP-1110-MONOMER"/>
<dbReference type="UniPathway" id="UPA00109">
    <property type="reaction ID" value="UER00189"/>
</dbReference>
<dbReference type="UniPathway" id="UPA00138"/>
<dbReference type="Proteomes" id="UP000008186">
    <property type="component" value="Chromosome"/>
</dbReference>
<dbReference type="GO" id="GO:0005829">
    <property type="term" value="C:cytosol"/>
    <property type="evidence" value="ECO:0000318"/>
    <property type="project" value="GO_Central"/>
</dbReference>
<dbReference type="GO" id="GO:0004807">
    <property type="term" value="F:triose-phosphate isomerase activity"/>
    <property type="evidence" value="ECO:0000318"/>
    <property type="project" value="GO_Central"/>
</dbReference>
<dbReference type="GO" id="GO:0006094">
    <property type="term" value="P:gluconeogenesis"/>
    <property type="evidence" value="ECO:0000318"/>
    <property type="project" value="GO_Central"/>
</dbReference>
<dbReference type="GO" id="GO:0046166">
    <property type="term" value="P:glyceraldehyde-3-phosphate biosynthetic process"/>
    <property type="evidence" value="ECO:0000318"/>
    <property type="project" value="GO_Central"/>
</dbReference>
<dbReference type="GO" id="GO:0019563">
    <property type="term" value="P:glycerol catabolic process"/>
    <property type="evidence" value="ECO:0000318"/>
    <property type="project" value="GO_Central"/>
</dbReference>
<dbReference type="GO" id="GO:0006096">
    <property type="term" value="P:glycolytic process"/>
    <property type="evidence" value="ECO:0000318"/>
    <property type="project" value="GO_Central"/>
</dbReference>
<dbReference type="CDD" id="cd00311">
    <property type="entry name" value="TIM"/>
    <property type="match status" value="1"/>
</dbReference>
<dbReference type="FunFam" id="3.20.20.70:FF:000016">
    <property type="entry name" value="Triosephosphate isomerase"/>
    <property type="match status" value="1"/>
</dbReference>
<dbReference type="Gene3D" id="3.20.20.70">
    <property type="entry name" value="Aldolase class I"/>
    <property type="match status" value="1"/>
</dbReference>
<dbReference type="HAMAP" id="MF_00147_B">
    <property type="entry name" value="TIM_B"/>
    <property type="match status" value="1"/>
</dbReference>
<dbReference type="InterPro" id="IPR013785">
    <property type="entry name" value="Aldolase_TIM"/>
</dbReference>
<dbReference type="InterPro" id="IPR035990">
    <property type="entry name" value="TIM_sf"/>
</dbReference>
<dbReference type="InterPro" id="IPR022896">
    <property type="entry name" value="TrioseP_Isoase_bac/euk"/>
</dbReference>
<dbReference type="InterPro" id="IPR000652">
    <property type="entry name" value="Triosephosphate_isomerase"/>
</dbReference>
<dbReference type="InterPro" id="IPR020861">
    <property type="entry name" value="Triosephosphate_isomerase_AS"/>
</dbReference>
<dbReference type="NCBIfam" id="TIGR00419">
    <property type="entry name" value="tim"/>
    <property type="match status" value="1"/>
</dbReference>
<dbReference type="PANTHER" id="PTHR21139">
    <property type="entry name" value="TRIOSEPHOSPHATE ISOMERASE"/>
    <property type="match status" value="1"/>
</dbReference>
<dbReference type="PANTHER" id="PTHR21139:SF42">
    <property type="entry name" value="TRIOSEPHOSPHATE ISOMERASE"/>
    <property type="match status" value="1"/>
</dbReference>
<dbReference type="Pfam" id="PF00121">
    <property type="entry name" value="TIM"/>
    <property type="match status" value="1"/>
</dbReference>
<dbReference type="SUPFAM" id="SSF51351">
    <property type="entry name" value="Triosephosphate isomerase (TIM)"/>
    <property type="match status" value="1"/>
</dbReference>
<dbReference type="PROSITE" id="PS00171">
    <property type="entry name" value="TIM_1"/>
    <property type="match status" value="1"/>
</dbReference>
<dbReference type="PROSITE" id="PS51440">
    <property type="entry name" value="TIM_2"/>
    <property type="match status" value="1"/>
</dbReference>
<accession>Q8EHL9</accession>
<keyword id="KW-0963">Cytoplasm</keyword>
<keyword id="KW-0312">Gluconeogenesis</keyword>
<keyword id="KW-0324">Glycolysis</keyword>
<keyword id="KW-0413">Isomerase</keyword>
<keyword id="KW-1185">Reference proteome</keyword>
<feature type="chain" id="PRO_0000090281" description="Triosephosphate isomerase">
    <location>
        <begin position="1"/>
        <end position="260"/>
    </location>
</feature>
<feature type="active site" description="Electrophile" evidence="1">
    <location>
        <position position="103"/>
    </location>
</feature>
<feature type="active site" description="Proton acceptor" evidence="1">
    <location>
        <position position="175"/>
    </location>
</feature>
<feature type="binding site" evidence="1">
    <location>
        <begin position="11"/>
        <end position="13"/>
    </location>
    <ligand>
        <name>substrate</name>
    </ligand>
</feature>
<feature type="binding site" evidence="1">
    <location>
        <position position="181"/>
    </location>
    <ligand>
        <name>substrate</name>
    </ligand>
</feature>
<feature type="binding site" evidence="1">
    <location>
        <position position="220"/>
    </location>
    <ligand>
        <name>substrate</name>
    </ligand>
</feature>
<feature type="binding site" evidence="1">
    <location>
        <begin position="241"/>
        <end position="242"/>
    </location>
    <ligand>
        <name>substrate</name>
    </ligand>
</feature>
<proteinExistence type="inferred from homology"/>
<gene>
    <name evidence="1" type="primary">tpiA</name>
    <name type="ordered locus">SO_1200</name>
</gene>
<reference key="1">
    <citation type="journal article" date="2002" name="Nat. Biotechnol.">
        <title>Genome sequence of the dissimilatory metal ion-reducing bacterium Shewanella oneidensis.</title>
        <authorList>
            <person name="Heidelberg J.F."/>
            <person name="Paulsen I.T."/>
            <person name="Nelson K.E."/>
            <person name="Gaidos E.J."/>
            <person name="Nelson W.C."/>
            <person name="Read T.D."/>
            <person name="Eisen J.A."/>
            <person name="Seshadri R."/>
            <person name="Ward N.L."/>
            <person name="Methe B.A."/>
            <person name="Clayton R.A."/>
            <person name="Meyer T."/>
            <person name="Tsapin A."/>
            <person name="Scott J."/>
            <person name="Beanan M.J."/>
            <person name="Brinkac L.M."/>
            <person name="Daugherty S.C."/>
            <person name="DeBoy R.T."/>
            <person name="Dodson R.J."/>
            <person name="Durkin A.S."/>
            <person name="Haft D.H."/>
            <person name="Kolonay J.F."/>
            <person name="Madupu R."/>
            <person name="Peterson J.D."/>
            <person name="Umayam L.A."/>
            <person name="White O."/>
            <person name="Wolf A.M."/>
            <person name="Vamathevan J.J."/>
            <person name="Weidman J.F."/>
            <person name="Impraim M."/>
            <person name="Lee K."/>
            <person name="Berry K.J."/>
            <person name="Lee C."/>
            <person name="Mueller J."/>
            <person name="Khouri H.M."/>
            <person name="Gill J."/>
            <person name="Utterback T.R."/>
            <person name="McDonald L.A."/>
            <person name="Feldblyum T.V."/>
            <person name="Smith H.O."/>
            <person name="Venter J.C."/>
            <person name="Nealson K.H."/>
            <person name="Fraser C.M."/>
        </authorList>
    </citation>
    <scope>NUCLEOTIDE SEQUENCE [LARGE SCALE GENOMIC DNA]</scope>
    <source>
        <strain>ATCC 700550 / JCM 31522 / CIP 106686 / LMG 19005 / NCIMB 14063 / MR-1</strain>
    </source>
</reference>
<comment type="function">
    <text evidence="1">Involved in the gluconeogenesis. Catalyzes stereospecifically the conversion of dihydroxyacetone phosphate (DHAP) to D-glyceraldehyde-3-phosphate (G3P).</text>
</comment>
<comment type="catalytic activity">
    <reaction evidence="1">
        <text>D-glyceraldehyde 3-phosphate = dihydroxyacetone phosphate</text>
        <dbReference type="Rhea" id="RHEA:18585"/>
        <dbReference type="ChEBI" id="CHEBI:57642"/>
        <dbReference type="ChEBI" id="CHEBI:59776"/>
        <dbReference type="EC" id="5.3.1.1"/>
    </reaction>
</comment>
<comment type="pathway">
    <text evidence="1">Carbohydrate biosynthesis; gluconeogenesis.</text>
</comment>
<comment type="pathway">
    <text evidence="1">Carbohydrate degradation; glycolysis; D-glyceraldehyde 3-phosphate from glycerone phosphate: step 1/1.</text>
</comment>
<comment type="subunit">
    <text evidence="1">Homodimer.</text>
</comment>
<comment type="subcellular location">
    <subcellularLocation>
        <location evidence="1">Cytoplasm</location>
    </subcellularLocation>
</comment>
<comment type="similarity">
    <text evidence="1">Belongs to the triosephosphate isomerase family.</text>
</comment>
<sequence>MALRRPMVAGNWKMNGSAALAQELFKKFASKLQNDSAEVVLCPPSIYLESVRQLLEANKEALDGSLVRMGAQNLSQHDFGAYTGEVSGQMLKDCGCRYVIIGHSERRRMYGETSNIVAEKFAAAQKHGLTPILCVGESGPAREARRTFEVIAEELDIVIQKNGTMAFDNAIIAYEPLWAVGTGKSATPEQAQEVHAFIRKRLSEVSPFIGENIRILYGGSVTPSNAADLFAQPDVDGGLIGGASLNSTEFLSLCTIAMSA</sequence>
<organism>
    <name type="scientific">Shewanella oneidensis (strain ATCC 700550 / JCM 31522 / CIP 106686 / LMG 19005 / NCIMB 14063 / MR-1)</name>
    <dbReference type="NCBI Taxonomy" id="211586"/>
    <lineage>
        <taxon>Bacteria</taxon>
        <taxon>Pseudomonadati</taxon>
        <taxon>Pseudomonadota</taxon>
        <taxon>Gammaproteobacteria</taxon>
        <taxon>Alteromonadales</taxon>
        <taxon>Shewanellaceae</taxon>
        <taxon>Shewanella</taxon>
    </lineage>
</organism>
<evidence type="ECO:0000255" key="1">
    <source>
        <dbReference type="HAMAP-Rule" id="MF_00147"/>
    </source>
</evidence>
<name>TPIS_SHEON</name>